<name>DYN3_MOUSE</name>
<dbReference type="EC" id="3.6.5.5"/>
<dbReference type="EMBL" id="AK036199">
    <property type="protein sequence ID" value="BAC29343.1"/>
    <property type="molecule type" value="mRNA"/>
</dbReference>
<dbReference type="EMBL" id="AK049724">
    <property type="protein sequence ID" value="BAC33895.1"/>
    <property type="molecule type" value="mRNA"/>
</dbReference>
<dbReference type="EMBL" id="AK147678">
    <property type="protein sequence ID" value="BAE28068.1"/>
    <property type="molecule type" value="mRNA"/>
</dbReference>
<dbReference type="EMBL" id="BC141143">
    <property type="protein sequence ID" value="AAI41144.1"/>
    <property type="molecule type" value="mRNA"/>
</dbReference>
<dbReference type="EMBL" id="BC141144">
    <property type="protein sequence ID" value="AAI41145.1"/>
    <property type="molecule type" value="mRNA"/>
</dbReference>
<dbReference type="EMBL" id="AK122379">
    <property type="protein sequence ID" value="BAC65661.1"/>
    <property type="molecule type" value="Transcribed_RNA"/>
</dbReference>
<dbReference type="CCDS" id="CCDS48417.1">
    <molecule id="Q8BZ98-2"/>
</dbReference>
<dbReference type="RefSeq" id="NP_001033708.1">
    <molecule id="Q8BZ98-1"/>
    <property type="nucleotide sequence ID" value="NM_001038619.2"/>
</dbReference>
<dbReference type="RefSeq" id="NP_766234.1">
    <molecule id="Q8BZ98-2"/>
    <property type="nucleotide sequence ID" value="NM_172646.3"/>
</dbReference>
<dbReference type="SMR" id="Q8BZ98"/>
<dbReference type="BioGRID" id="222243">
    <property type="interactions" value="13"/>
</dbReference>
<dbReference type="FunCoup" id="Q8BZ98">
    <property type="interactions" value="1358"/>
</dbReference>
<dbReference type="IntAct" id="Q8BZ98">
    <property type="interactions" value="8"/>
</dbReference>
<dbReference type="MINT" id="Q8BZ98"/>
<dbReference type="STRING" id="10090.ENSMUSP00000064538"/>
<dbReference type="GlyGen" id="Q8BZ98">
    <property type="glycosylation" value="5 sites, 2 N-linked glycans (2 sites), 1 O-linked glycan (2 sites)"/>
</dbReference>
<dbReference type="iPTMnet" id="Q8BZ98"/>
<dbReference type="MetOSite" id="Q8BZ98"/>
<dbReference type="PhosphoSitePlus" id="Q8BZ98"/>
<dbReference type="SwissPalm" id="Q8BZ98"/>
<dbReference type="jPOST" id="Q8BZ98"/>
<dbReference type="PaxDb" id="10090-ENSMUSP00000064538"/>
<dbReference type="PeptideAtlas" id="Q8BZ98"/>
<dbReference type="ProteomicsDB" id="275421">
    <molecule id="Q8BZ98-1"/>
</dbReference>
<dbReference type="ProteomicsDB" id="275422">
    <molecule id="Q8BZ98-2"/>
</dbReference>
<dbReference type="Pumba" id="Q8BZ98"/>
<dbReference type="Antibodypedia" id="34382">
    <property type="antibodies" value="218 antibodies from 32 providers"/>
</dbReference>
<dbReference type="DNASU" id="103967"/>
<dbReference type="Ensembl" id="ENSMUST00000070330.14">
    <molecule id="Q8BZ98-2"/>
    <property type="protein sequence ID" value="ENSMUSP00000064538.8"/>
    <property type="gene ID" value="ENSMUSG00000040265.17"/>
</dbReference>
<dbReference type="GeneID" id="103967"/>
<dbReference type="KEGG" id="mmu:103967"/>
<dbReference type="UCSC" id="uc007dga.2">
    <molecule id="Q8BZ98-1"/>
    <property type="organism name" value="mouse"/>
</dbReference>
<dbReference type="UCSC" id="uc007dgb.2">
    <molecule id="Q8BZ98-2"/>
    <property type="organism name" value="mouse"/>
</dbReference>
<dbReference type="AGR" id="MGI:1341299"/>
<dbReference type="CTD" id="26052"/>
<dbReference type="MGI" id="MGI:1341299">
    <property type="gene designation" value="Dnm3"/>
</dbReference>
<dbReference type="VEuPathDB" id="HostDB:ENSMUSG00000040265"/>
<dbReference type="eggNOG" id="KOG0446">
    <property type="taxonomic scope" value="Eukaryota"/>
</dbReference>
<dbReference type="GeneTree" id="ENSGT00940000158056"/>
<dbReference type="HOGENOM" id="CLU_008964_1_1_1"/>
<dbReference type="InParanoid" id="Q8BZ98"/>
<dbReference type="OMA" id="XVLLLID"/>
<dbReference type="PhylomeDB" id="Q8BZ98"/>
<dbReference type="TreeFam" id="TF300362"/>
<dbReference type="Reactome" id="R-MMU-166016">
    <property type="pathway name" value="Toll Like Receptor 4 (TLR4) Cascade"/>
</dbReference>
<dbReference type="Reactome" id="R-MMU-2132295">
    <property type="pathway name" value="MHC class II antigen presentation"/>
</dbReference>
<dbReference type="Reactome" id="R-MMU-437239">
    <property type="pathway name" value="Recycling pathway of L1"/>
</dbReference>
<dbReference type="Reactome" id="R-MMU-8856828">
    <property type="pathway name" value="Clathrin-mediated endocytosis"/>
</dbReference>
<dbReference type="BioGRID-ORCS" id="103967">
    <property type="hits" value="0 hits in 77 CRISPR screens"/>
</dbReference>
<dbReference type="CD-CODE" id="CE726F99">
    <property type="entry name" value="Postsynaptic density"/>
</dbReference>
<dbReference type="ChiTaRS" id="Dnm3">
    <property type="organism name" value="mouse"/>
</dbReference>
<dbReference type="PRO" id="PR:Q8BZ98"/>
<dbReference type="Proteomes" id="UP000000589">
    <property type="component" value="Chromosome 1"/>
</dbReference>
<dbReference type="RNAct" id="Q8BZ98">
    <property type="molecule type" value="protein"/>
</dbReference>
<dbReference type="Bgee" id="ENSMUSG00000040265">
    <property type="expression patterns" value="Expressed in facial nucleus and 173 other cell types or tissues"/>
</dbReference>
<dbReference type="ExpressionAtlas" id="Q8BZ98">
    <property type="expression patterns" value="baseline and differential"/>
</dbReference>
<dbReference type="GO" id="GO:0005874">
    <property type="term" value="C:microtubule"/>
    <property type="evidence" value="ECO:0007669"/>
    <property type="project" value="UniProtKB-KW"/>
</dbReference>
<dbReference type="GO" id="GO:0005739">
    <property type="term" value="C:mitochondrion"/>
    <property type="evidence" value="ECO:0007005"/>
    <property type="project" value="MGI"/>
</dbReference>
<dbReference type="GO" id="GO:0001917">
    <property type="term" value="C:photoreceptor inner segment"/>
    <property type="evidence" value="ECO:0000314"/>
    <property type="project" value="MGI"/>
</dbReference>
<dbReference type="GO" id="GO:0098793">
    <property type="term" value="C:presynapse"/>
    <property type="evidence" value="ECO:0000314"/>
    <property type="project" value="SynGO"/>
</dbReference>
<dbReference type="GO" id="GO:0005525">
    <property type="term" value="F:GTP binding"/>
    <property type="evidence" value="ECO:0007669"/>
    <property type="project" value="UniProtKB-KW"/>
</dbReference>
<dbReference type="GO" id="GO:0003924">
    <property type="term" value="F:GTPase activity"/>
    <property type="evidence" value="ECO:0007669"/>
    <property type="project" value="InterPro"/>
</dbReference>
<dbReference type="GO" id="GO:0048488">
    <property type="term" value="P:synaptic vesicle endocytosis"/>
    <property type="evidence" value="ECO:0000314"/>
    <property type="project" value="SynGO"/>
</dbReference>
<dbReference type="CDD" id="cd08771">
    <property type="entry name" value="DLP_1"/>
    <property type="match status" value="1"/>
</dbReference>
<dbReference type="CDD" id="cd01256">
    <property type="entry name" value="PH_dynamin"/>
    <property type="match status" value="1"/>
</dbReference>
<dbReference type="FunFam" id="1.20.120.1240:FF:000019">
    <property type="entry name" value="Dynamin 2"/>
    <property type="match status" value="1"/>
</dbReference>
<dbReference type="FunFam" id="1.20.120.1240:FF:000014">
    <property type="entry name" value="Dynamin 2b"/>
    <property type="match status" value="1"/>
</dbReference>
<dbReference type="FunFam" id="3.40.50.300:FF:000045">
    <property type="entry name" value="dynamin-1 isoform X2"/>
    <property type="match status" value="1"/>
</dbReference>
<dbReference type="FunFam" id="2.30.29.30:FF:000341">
    <property type="entry name" value="dynamin-3 isoform X1"/>
    <property type="match status" value="1"/>
</dbReference>
<dbReference type="Gene3D" id="1.20.120.1240">
    <property type="entry name" value="Dynamin, middle domain"/>
    <property type="match status" value="1"/>
</dbReference>
<dbReference type="Gene3D" id="3.40.50.300">
    <property type="entry name" value="P-loop containing nucleotide triphosphate hydrolases"/>
    <property type="match status" value="1"/>
</dbReference>
<dbReference type="Gene3D" id="2.30.29.30">
    <property type="entry name" value="Pleckstrin-homology domain (PH domain)/Phosphotyrosine-binding domain (PTB)"/>
    <property type="match status" value="1"/>
</dbReference>
<dbReference type="InterPro" id="IPR022812">
    <property type="entry name" value="Dynamin"/>
</dbReference>
<dbReference type="InterPro" id="IPR001401">
    <property type="entry name" value="Dynamin_GTPase"/>
</dbReference>
<dbReference type="InterPro" id="IPR019762">
    <property type="entry name" value="Dynamin_GTPase_CS"/>
</dbReference>
<dbReference type="InterPro" id="IPR045063">
    <property type="entry name" value="Dynamin_N"/>
</dbReference>
<dbReference type="InterPro" id="IPR000375">
    <property type="entry name" value="Dynamin_stalk"/>
</dbReference>
<dbReference type="InterPro" id="IPR030381">
    <property type="entry name" value="G_DYNAMIN_dom"/>
</dbReference>
<dbReference type="InterPro" id="IPR003130">
    <property type="entry name" value="GED"/>
</dbReference>
<dbReference type="InterPro" id="IPR020850">
    <property type="entry name" value="GED_dom"/>
</dbReference>
<dbReference type="InterPro" id="IPR027417">
    <property type="entry name" value="P-loop_NTPase"/>
</dbReference>
<dbReference type="InterPro" id="IPR011993">
    <property type="entry name" value="PH-like_dom_sf"/>
</dbReference>
<dbReference type="InterPro" id="IPR001849">
    <property type="entry name" value="PH_domain"/>
</dbReference>
<dbReference type="PANTHER" id="PTHR11566">
    <property type="entry name" value="DYNAMIN"/>
    <property type="match status" value="1"/>
</dbReference>
<dbReference type="PANTHER" id="PTHR11566:SF54">
    <property type="entry name" value="DYNAMIN-3"/>
    <property type="match status" value="1"/>
</dbReference>
<dbReference type="Pfam" id="PF01031">
    <property type="entry name" value="Dynamin_M"/>
    <property type="match status" value="1"/>
</dbReference>
<dbReference type="Pfam" id="PF00350">
    <property type="entry name" value="Dynamin_N"/>
    <property type="match status" value="1"/>
</dbReference>
<dbReference type="Pfam" id="PF02212">
    <property type="entry name" value="GED"/>
    <property type="match status" value="1"/>
</dbReference>
<dbReference type="Pfam" id="PF00169">
    <property type="entry name" value="PH"/>
    <property type="match status" value="1"/>
</dbReference>
<dbReference type="PRINTS" id="PR00195">
    <property type="entry name" value="DYNAMIN"/>
</dbReference>
<dbReference type="SMART" id="SM00053">
    <property type="entry name" value="DYNc"/>
    <property type="match status" value="1"/>
</dbReference>
<dbReference type="SMART" id="SM00302">
    <property type="entry name" value="GED"/>
    <property type="match status" value="1"/>
</dbReference>
<dbReference type="SMART" id="SM00233">
    <property type="entry name" value="PH"/>
    <property type="match status" value="1"/>
</dbReference>
<dbReference type="SUPFAM" id="SSF52540">
    <property type="entry name" value="P-loop containing nucleoside triphosphate hydrolases"/>
    <property type="match status" value="1"/>
</dbReference>
<dbReference type="SUPFAM" id="SSF50729">
    <property type="entry name" value="PH domain-like"/>
    <property type="match status" value="1"/>
</dbReference>
<dbReference type="PROSITE" id="PS00410">
    <property type="entry name" value="G_DYNAMIN_1"/>
    <property type="match status" value="1"/>
</dbReference>
<dbReference type="PROSITE" id="PS51718">
    <property type="entry name" value="G_DYNAMIN_2"/>
    <property type="match status" value="1"/>
</dbReference>
<dbReference type="PROSITE" id="PS51388">
    <property type="entry name" value="GED"/>
    <property type="match status" value="1"/>
</dbReference>
<dbReference type="PROSITE" id="PS50003">
    <property type="entry name" value="PH_DOMAIN"/>
    <property type="match status" value="1"/>
</dbReference>
<gene>
    <name type="primary">Dnm3</name>
    <name type="synonym">Kiaa0820</name>
</gene>
<comment type="function">
    <text evidence="1">Microtubule-associated force-producing protein involved in producing microtubule bundles and able to bind and hydrolyze GTP. Most probably involved in vesicular trafficking processes, in particular endocytosis (By similarity).</text>
</comment>
<comment type="catalytic activity">
    <reaction>
        <text>GTP + H2O = GDP + phosphate + H(+)</text>
        <dbReference type="Rhea" id="RHEA:19669"/>
        <dbReference type="ChEBI" id="CHEBI:15377"/>
        <dbReference type="ChEBI" id="CHEBI:15378"/>
        <dbReference type="ChEBI" id="CHEBI:37565"/>
        <dbReference type="ChEBI" id="CHEBI:43474"/>
        <dbReference type="ChEBI" id="CHEBI:58189"/>
        <dbReference type="EC" id="3.6.5.5"/>
    </reaction>
</comment>
<comment type="interaction">
    <interactant intactId="EBI-6880033">
        <id>Q8BZ98</id>
    </interactant>
    <interactant intactId="EBI-775139">
        <id>Q7TQF7</id>
        <label>Amph</label>
    </interactant>
    <organismsDiffer>false</organismsDiffer>
    <experiments>2</experiments>
</comment>
<comment type="subcellular location">
    <subcellularLocation>
        <location evidence="1">Cytoplasm</location>
    </subcellularLocation>
    <subcellularLocation>
        <location evidence="1">Cytoplasm</location>
        <location evidence="1">Cytoskeleton</location>
    </subcellularLocation>
    <text evidence="1">Microtubule-associated.</text>
</comment>
<comment type="alternative products">
    <event type="alternative splicing"/>
    <isoform>
        <id>Q8BZ98-1</id>
        <name>1</name>
        <sequence type="displayed"/>
    </isoform>
    <isoform>
        <id>Q8BZ98-2</id>
        <name>2</name>
        <sequence type="described" ref="VSP_031548"/>
    </isoform>
</comment>
<comment type="similarity">
    <text evidence="9">Belongs to the TRAFAC class dynamin-like GTPase superfamily. Dynamin/Fzo/YdjA family.</text>
</comment>
<evidence type="ECO:0000250" key="1"/>
<evidence type="ECO:0000250" key="2">
    <source>
        <dbReference type="UniProtKB" id="P39052"/>
    </source>
</evidence>
<evidence type="ECO:0000250" key="3">
    <source>
        <dbReference type="UniProtKB" id="P39054"/>
    </source>
</evidence>
<evidence type="ECO:0000250" key="4">
    <source>
        <dbReference type="UniProtKB" id="P50570"/>
    </source>
</evidence>
<evidence type="ECO:0000250" key="5">
    <source>
        <dbReference type="UniProtKB" id="Q08877"/>
    </source>
</evidence>
<evidence type="ECO:0000250" key="6">
    <source>
        <dbReference type="UniProtKB" id="Q9UQ16"/>
    </source>
</evidence>
<evidence type="ECO:0000255" key="7">
    <source>
        <dbReference type="PROSITE-ProRule" id="PRU00145"/>
    </source>
</evidence>
<evidence type="ECO:0000255" key="8">
    <source>
        <dbReference type="PROSITE-ProRule" id="PRU00720"/>
    </source>
</evidence>
<evidence type="ECO:0000255" key="9">
    <source>
        <dbReference type="PROSITE-ProRule" id="PRU01055"/>
    </source>
</evidence>
<evidence type="ECO:0000256" key="10">
    <source>
        <dbReference type="SAM" id="MobiDB-lite"/>
    </source>
</evidence>
<evidence type="ECO:0000303" key="11">
    <source>
    </source>
</evidence>
<evidence type="ECO:0000305" key="12"/>
<feature type="chain" id="PRO_0000319951" description="Dynamin-3">
    <location>
        <begin position="1"/>
        <end position="863"/>
    </location>
</feature>
<feature type="domain" description="Dynamin-type G" evidence="9">
    <location>
        <begin position="28"/>
        <end position="294"/>
    </location>
</feature>
<feature type="domain" description="PH" evidence="7">
    <location>
        <begin position="515"/>
        <end position="621"/>
    </location>
</feature>
<feature type="domain" description="GED" evidence="8">
    <location>
        <begin position="653"/>
        <end position="744"/>
    </location>
</feature>
<feature type="region of interest" description="G1 motif" evidence="9">
    <location>
        <begin position="38"/>
        <end position="45"/>
    </location>
</feature>
<feature type="region of interest" description="G2 motif" evidence="9">
    <location>
        <begin position="64"/>
        <end position="66"/>
    </location>
</feature>
<feature type="region of interest" description="G3 motif" evidence="9">
    <location>
        <begin position="136"/>
        <end position="139"/>
    </location>
</feature>
<feature type="region of interest" description="G4 motif" evidence="9">
    <location>
        <begin position="205"/>
        <end position="208"/>
    </location>
</feature>
<feature type="region of interest" description="G5 motif" evidence="9">
    <location>
        <begin position="235"/>
        <end position="238"/>
    </location>
</feature>
<feature type="region of interest" description="Disordered" evidence="10">
    <location>
        <begin position="626"/>
        <end position="647"/>
    </location>
</feature>
<feature type="region of interest" description="Disordered" evidence="10">
    <location>
        <begin position="742"/>
        <end position="863"/>
    </location>
</feature>
<feature type="compositionally biased region" description="Polar residues" evidence="10">
    <location>
        <begin position="627"/>
        <end position="642"/>
    </location>
</feature>
<feature type="compositionally biased region" description="Pro residues" evidence="10">
    <location>
        <begin position="791"/>
        <end position="816"/>
    </location>
</feature>
<feature type="compositionally biased region" description="Pro residues" evidence="10">
    <location>
        <begin position="826"/>
        <end position="849"/>
    </location>
</feature>
<feature type="binding site" evidence="6">
    <location>
        <begin position="38"/>
        <end position="46"/>
    </location>
    <ligand>
        <name>GTP</name>
        <dbReference type="ChEBI" id="CHEBI:37565"/>
    </ligand>
</feature>
<feature type="binding site" evidence="6">
    <location>
        <begin position="205"/>
        <end position="211"/>
    </location>
    <ligand>
        <name>GTP</name>
        <dbReference type="ChEBI" id="CHEBI:37565"/>
    </ligand>
</feature>
<feature type="binding site" evidence="6">
    <location>
        <begin position="236"/>
        <end position="239"/>
    </location>
    <ligand>
        <name>GTP</name>
        <dbReference type="ChEBI" id="CHEBI:37565"/>
    </ligand>
</feature>
<feature type="modified residue" description="Phosphotyrosine" evidence="2">
    <location>
        <position position="231"/>
    </location>
</feature>
<feature type="modified residue" description="N6-acetyllysine" evidence="3">
    <location>
        <position position="299"/>
    </location>
</feature>
<feature type="modified residue" description="Phosphotyrosine" evidence="2">
    <location>
        <position position="593"/>
    </location>
</feature>
<feature type="modified residue" description="N6-acetyllysine" evidence="4">
    <location>
        <position position="594"/>
    </location>
</feature>
<feature type="modified residue" description="Phosphoserine" evidence="5">
    <location>
        <position position="763"/>
    </location>
</feature>
<feature type="modified residue" description="Phosphoserine" evidence="2">
    <location>
        <position position="767"/>
    </location>
</feature>
<feature type="modified residue" description="Phosphoserine" evidence="5">
    <location>
        <position position="847"/>
    </location>
</feature>
<feature type="splice variant" id="VSP_031548" description="In isoform 2." evidence="11">
    <location>
        <begin position="628"/>
        <end position="631"/>
    </location>
</feature>
<feature type="sequence conflict" description="In Ref. 1; BAE28068." evidence="12" ref="1">
    <original>G</original>
    <variation>A</variation>
    <location>
        <position position="139"/>
    </location>
</feature>
<feature type="sequence conflict" description="In Ref. 3; BAC65661." evidence="12" ref="3">
    <location>
        <begin position="532"/>
        <end position="549"/>
    </location>
</feature>
<reference key="1">
    <citation type="journal article" date="2005" name="Science">
        <title>The transcriptional landscape of the mammalian genome.</title>
        <authorList>
            <person name="Carninci P."/>
            <person name="Kasukawa T."/>
            <person name="Katayama S."/>
            <person name="Gough J."/>
            <person name="Frith M.C."/>
            <person name="Maeda N."/>
            <person name="Oyama R."/>
            <person name="Ravasi T."/>
            <person name="Lenhard B."/>
            <person name="Wells C."/>
            <person name="Kodzius R."/>
            <person name="Shimokawa K."/>
            <person name="Bajic V.B."/>
            <person name="Brenner S.E."/>
            <person name="Batalov S."/>
            <person name="Forrest A.R."/>
            <person name="Zavolan M."/>
            <person name="Davis M.J."/>
            <person name="Wilming L.G."/>
            <person name="Aidinis V."/>
            <person name="Allen J.E."/>
            <person name="Ambesi-Impiombato A."/>
            <person name="Apweiler R."/>
            <person name="Aturaliya R.N."/>
            <person name="Bailey T.L."/>
            <person name="Bansal M."/>
            <person name="Baxter L."/>
            <person name="Beisel K.W."/>
            <person name="Bersano T."/>
            <person name="Bono H."/>
            <person name="Chalk A.M."/>
            <person name="Chiu K.P."/>
            <person name="Choudhary V."/>
            <person name="Christoffels A."/>
            <person name="Clutterbuck D.R."/>
            <person name="Crowe M.L."/>
            <person name="Dalla E."/>
            <person name="Dalrymple B.P."/>
            <person name="de Bono B."/>
            <person name="Della Gatta G."/>
            <person name="di Bernardo D."/>
            <person name="Down T."/>
            <person name="Engstrom P."/>
            <person name="Fagiolini M."/>
            <person name="Faulkner G."/>
            <person name="Fletcher C.F."/>
            <person name="Fukushima T."/>
            <person name="Furuno M."/>
            <person name="Futaki S."/>
            <person name="Gariboldi M."/>
            <person name="Georgii-Hemming P."/>
            <person name="Gingeras T.R."/>
            <person name="Gojobori T."/>
            <person name="Green R.E."/>
            <person name="Gustincich S."/>
            <person name="Harbers M."/>
            <person name="Hayashi Y."/>
            <person name="Hensch T.K."/>
            <person name="Hirokawa N."/>
            <person name="Hill D."/>
            <person name="Huminiecki L."/>
            <person name="Iacono M."/>
            <person name="Ikeo K."/>
            <person name="Iwama A."/>
            <person name="Ishikawa T."/>
            <person name="Jakt M."/>
            <person name="Kanapin A."/>
            <person name="Katoh M."/>
            <person name="Kawasawa Y."/>
            <person name="Kelso J."/>
            <person name="Kitamura H."/>
            <person name="Kitano H."/>
            <person name="Kollias G."/>
            <person name="Krishnan S.P."/>
            <person name="Kruger A."/>
            <person name="Kummerfeld S.K."/>
            <person name="Kurochkin I.V."/>
            <person name="Lareau L.F."/>
            <person name="Lazarevic D."/>
            <person name="Lipovich L."/>
            <person name="Liu J."/>
            <person name="Liuni S."/>
            <person name="McWilliam S."/>
            <person name="Madan Babu M."/>
            <person name="Madera M."/>
            <person name="Marchionni L."/>
            <person name="Matsuda H."/>
            <person name="Matsuzawa S."/>
            <person name="Miki H."/>
            <person name="Mignone F."/>
            <person name="Miyake S."/>
            <person name="Morris K."/>
            <person name="Mottagui-Tabar S."/>
            <person name="Mulder N."/>
            <person name="Nakano N."/>
            <person name="Nakauchi H."/>
            <person name="Ng P."/>
            <person name="Nilsson R."/>
            <person name="Nishiguchi S."/>
            <person name="Nishikawa S."/>
            <person name="Nori F."/>
            <person name="Ohara O."/>
            <person name="Okazaki Y."/>
            <person name="Orlando V."/>
            <person name="Pang K.C."/>
            <person name="Pavan W.J."/>
            <person name="Pavesi G."/>
            <person name="Pesole G."/>
            <person name="Petrovsky N."/>
            <person name="Piazza S."/>
            <person name="Reed J."/>
            <person name="Reid J.F."/>
            <person name="Ring B.Z."/>
            <person name="Ringwald M."/>
            <person name="Rost B."/>
            <person name="Ruan Y."/>
            <person name="Salzberg S.L."/>
            <person name="Sandelin A."/>
            <person name="Schneider C."/>
            <person name="Schoenbach C."/>
            <person name="Sekiguchi K."/>
            <person name="Semple C.A."/>
            <person name="Seno S."/>
            <person name="Sessa L."/>
            <person name="Sheng Y."/>
            <person name="Shibata Y."/>
            <person name="Shimada H."/>
            <person name="Shimada K."/>
            <person name="Silva D."/>
            <person name="Sinclair B."/>
            <person name="Sperling S."/>
            <person name="Stupka E."/>
            <person name="Sugiura K."/>
            <person name="Sultana R."/>
            <person name="Takenaka Y."/>
            <person name="Taki K."/>
            <person name="Tammoja K."/>
            <person name="Tan S.L."/>
            <person name="Tang S."/>
            <person name="Taylor M.S."/>
            <person name="Tegner J."/>
            <person name="Teichmann S.A."/>
            <person name="Ueda H.R."/>
            <person name="van Nimwegen E."/>
            <person name="Verardo R."/>
            <person name="Wei C.L."/>
            <person name="Yagi K."/>
            <person name="Yamanishi H."/>
            <person name="Zabarovsky E."/>
            <person name="Zhu S."/>
            <person name="Zimmer A."/>
            <person name="Hide W."/>
            <person name="Bult C."/>
            <person name="Grimmond S.M."/>
            <person name="Teasdale R.D."/>
            <person name="Liu E.T."/>
            <person name="Brusic V."/>
            <person name="Quackenbush J."/>
            <person name="Wahlestedt C."/>
            <person name="Mattick J.S."/>
            <person name="Hume D.A."/>
            <person name="Kai C."/>
            <person name="Sasaki D."/>
            <person name="Tomaru Y."/>
            <person name="Fukuda S."/>
            <person name="Kanamori-Katayama M."/>
            <person name="Suzuki M."/>
            <person name="Aoki J."/>
            <person name="Arakawa T."/>
            <person name="Iida J."/>
            <person name="Imamura K."/>
            <person name="Itoh M."/>
            <person name="Kato T."/>
            <person name="Kawaji H."/>
            <person name="Kawagashira N."/>
            <person name="Kawashima T."/>
            <person name="Kojima M."/>
            <person name="Kondo S."/>
            <person name="Konno H."/>
            <person name="Nakano K."/>
            <person name="Ninomiya N."/>
            <person name="Nishio T."/>
            <person name="Okada M."/>
            <person name="Plessy C."/>
            <person name="Shibata K."/>
            <person name="Shiraki T."/>
            <person name="Suzuki S."/>
            <person name="Tagami M."/>
            <person name="Waki K."/>
            <person name="Watahiki A."/>
            <person name="Okamura-Oho Y."/>
            <person name="Suzuki H."/>
            <person name="Kawai J."/>
            <person name="Hayashizaki Y."/>
        </authorList>
    </citation>
    <scope>NUCLEOTIDE SEQUENCE [LARGE SCALE MRNA] (ISOFORMS 1 AND 2)</scope>
    <source>
        <strain>C57BL/6J</strain>
        <tissue>Brain</tissue>
        <tissue>Cerebellum</tissue>
        <tissue>Spinal cord</tissue>
    </source>
</reference>
<reference key="2">
    <citation type="journal article" date="2004" name="Genome Res.">
        <title>The status, quality, and expansion of the NIH full-length cDNA project: the Mammalian Gene Collection (MGC).</title>
        <authorList>
            <consortium name="The MGC Project Team"/>
        </authorList>
    </citation>
    <scope>NUCLEOTIDE SEQUENCE [LARGE SCALE MRNA] (ISOFORM 1)</scope>
    <source>
        <tissue>Brain</tissue>
    </source>
</reference>
<reference key="3">
    <citation type="journal article" date="2003" name="DNA Res.">
        <title>Prediction of the coding sequences of mouse homologues of KIAA gene: II. The complete nucleotide sequences of 400 mouse KIAA-homologous cDNAs identified by screening of terminal sequences of cDNA clones randomly sampled from size-fractionated libraries.</title>
        <authorList>
            <person name="Okazaki N."/>
            <person name="Kikuno R."/>
            <person name="Ohara R."/>
            <person name="Inamoto S."/>
            <person name="Aizawa H."/>
            <person name="Yuasa S."/>
            <person name="Nakajima D."/>
            <person name="Nagase T."/>
            <person name="Ohara O."/>
            <person name="Koga H."/>
        </authorList>
    </citation>
    <scope>NUCLEOTIDE SEQUENCE [LARGE SCALE MRNA] OF 394-863 (ISOFORM 1)</scope>
    <source>
        <tissue>Brain</tissue>
    </source>
</reference>
<reference key="4">
    <citation type="journal article" date="2007" name="Mol. Cell. Proteomics">
        <title>Qualitative and quantitative analyses of protein phosphorylation in naive and stimulated mouse synaptosomal preparations.</title>
        <authorList>
            <person name="Munton R.P."/>
            <person name="Tweedie-Cullen R."/>
            <person name="Livingstone-Zatchej M."/>
            <person name="Weinandy F."/>
            <person name="Waidelich M."/>
            <person name="Longo D."/>
            <person name="Gehrig P."/>
            <person name="Potthast F."/>
            <person name="Rutishauser D."/>
            <person name="Gerrits B."/>
            <person name="Panse C."/>
            <person name="Schlapbach R."/>
            <person name="Mansuy I.M."/>
        </authorList>
    </citation>
    <scope>IDENTIFICATION BY MASS SPECTROMETRY [LARGE SCALE ANALYSIS]</scope>
    <source>
        <tissue>Brain cortex</tissue>
    </source>
</reference>
<reference key="5">
    <citation type="journal article" date="2010" name="Cell">
        <title>A tissue-specific atlas of mouse protein phosphorylation and expression.</title>
        <authorList>
            <person name="Huttlin E.L."/>
            <person name="Jedrychowski M.P."/>
            <person name="Elias J.E."/>
            <person name="Goswami T."/>
            <person name="Rad R."/>
            <person name="Beausoleil S.A."/>
            <person name="Villen J."/>
            <person name="Haas W."/>
            <person name="Sowa M.E."/>
            <person name="Gygi S.P."/>
        </authorList>
    </citation>
    <scope>IDENTIFICATION BY MASS SPECTROMETRY [LARGE SCALE ANALYSIS]</scope>
    <source>
        <tissue>Brain</tissue>
        <tissue>Brown adipose tissue</tissue>
        <tissue>Kidney</tissue>
        <tissue>Lung</tissue>
        <tissue>Testis</tissue>
    </source>
</reference>
<protein>
    <recommendedName>
        <fullName>Dynamin-3</fullName>
        <ecNumber>3.6.5.5</ecNumber>
    </recommendedName>
</protein>
<sequence length="863" mass="97190">MGNREMEELIPLVNRLQDAFSALGQSCLLELPQIAVVGGQSAGKSSVLENFVGRDFLPRGSGIVTRRPLVLQLVTSKAEYAEFLHCKGKKFTDFDEVRHEIEAETDRVTGMNKGISSIPINLRVYSPHVLNLTLIDLPGITKVPVGDQPPDIEYQIRDMIMQFITRENCLILAVTPANTDLANSDALKLAKEVDPQGLRTIGVITKLDLMDEGTDARDVLENKLLPLRRGYVGVVNRSQKDIDGKKDIKAAMLAERKFFLSHPAYRHIADRMGTPHLQKVLNQQLTNHIRDTLPNFRNKLQGQLLSIEHEVEAFKNFKPEDPTRKTKALLQMVQQFAVDFEKRIEGSGDQVDTLELSGGAKINRIFHERFPFEIVKMEFNEKELRREISYAIKNIHGIRTGLFTPDMAFEAIVKKQIVKLKGPSLKSVDLVMQELINTVKKCTKRLANFPRLCEETERIVANHIREREGKTKDQVLLLIDIQVSYINTNHEDFIGFANAQQRSSQVHKKSTIGNQVIRKGWLTVSNIGIMKGGSKGYWFVLTAESLSWYKDDEEKEKKYMLPLDNLKVRDVEKGFMSSKHVFALFNTEQRNVYKDYRFLELACDSQEDVDSWKASLLRAGVYPDKSVGSNKTENDENGQAENFSMDPQLERQVETIRNLVDSYMSIINKCIRDLIPKTIMHLMINNVKDFINSELLAQLYSSEDQNTLMEESAEQAQRRDEMLRMYQALKEALAIIGDINTATVSTPAPPPVDDSWLQHSRRSPPPSPTTQRRLTISAPLPRPTSGRGPAPAIPSPGPHSGAPPVPFRPGPLPPFPNSSDSFGAPPQVPSRPTRAPPSVPSRRPPPSPTRPTIIRPLESSLLD</sequence>
<proteinExistence type="evidence at protein level"/>
<organism>
    <name type="scientific">Mus musculus</name>
    <name type="common">Mouse</name>
    <dbReference type="NCBI Taxonomy" id="10090"/>
    <lineage>
        <taxon>Eukaryota</taxon>
        <taxon>Metazoa</taxon>
        <taxon>Chordata</taxon>
        <taxon>Craniata</taxon>
        <taxon>Vertebrata</taxon>
        <taxon>Euteleostomi</taxon>
        <taxon>Mammalia</taxon>
        <taxon>Eutheria</taxon>
        <taxon>Euarchontoglires</taxon>
        <taxon>Glires</taxon>
        <taxon>Rodentia</taxon>
        <taxon>Myomorpha</taxon>
        <taxon>Muroidea</taxon>
        <taxon>Muridae</taxon>
        <taxon>Murinae</taxon>
        <taxon>Mus</taxon>
        <taxon>Mus</taxon>
    </lineage>
</organism>
<accession>Q8BZ98</accession>
<accession>B2RUH0</accession>
<accession>Q3UGY9</accession>
<accession>Q80TR2</accession>
<accession>Q8BWW6</accession>
<keyword id="KW-0007">Acetylation</keyword>
<keyword id="KW-0025">Alternative splicing</keyword>
<keyword id="KW-0963">Cytoplasm</keyword>
<keyword id="KW-0206">Cytoskeleton</keyword>
<keyword id="KW-0254">Endocytosis</keyword>
<keyword id="KW-0342">GTP-binding</keyword>
<keyword id="KW-0378">Hydrolase</keyword>
<keyword id="KW-0493">Microtubule</keyword>
<keyword id="KW-0505">Motor protein</keyword>
<keyword id="KW-0547">Nucleotide-binding</keyword>
<keyword id="KW-0597">Phosphoprotein</keyword>
<keyword id="KW-1185">Reference proteome</keyword>